<gene>
    <name evidence="3" type="primary">lyeJ</name>
    <name evidence="3" type="synonym">c0506</name>
    <name evidence="6" type="ORF">C444_12922</name>
</gene>
<dbReference type="EC" id="2.5.1.150" evidence="2"/>
<dbReference type="EMBL" id="LC008543">
    <property type="protein sequence ID" value="BAP82510.1"/>
    <property type="molecule type" value="Genomic_DNA"/>
</dbReference>
<dbReference type="EMBL" id="AOLY01000037">
    <property type="protein sequence ID" value="EMA29702.1"/>
    <property type="molecule type" value="Genomic_DNA"/>
</dbReference>
<dbReference type="RefSeq" id="WP_004593285.1">
    <property type="nucleotide sequence ID" value="NZ_AOLY01000037.1"/>
</dbReference>
<dbReference type="SMR" id="M0L7V9"/>
<dbReference type="STRING" id="1227453.C444_12922"/>
<dbReference type="KEGG" id="ag:BAP82510"/>
<dbReference type="PATRIC" id="fig|1227453.3.peg.2544"/>
<dbReference type="eggNOG" id="arCOG00478">
    <property type="taxonomic scope" value="Archaea"/>
</dbReference>
<dbReference type="OrthoDB" id="305381at2157"/>
<dbReference type="BRENDA" id="2.5.1.150">
    <property type="organism ID" value="13658"/>
</dbReference>
<dbReference type="Proteomes" id="UP000011524">
    <property type="component" value="Unassembled WGS sequence"/>
</dbReference>
<dbReference type="GO" id="GO:0005886">
    <property type="term" value="C:plasma membrane"/>
    <property type="evidence" value="ECO:0007669"/>
    <property type="project" value="UniProtKB-SubCell"/>
</dbReference>
<dbReference type="GO" id="GO:0016765">
    <property type="term" value="F:transferase activity, transferring alkyl or aryl (other than methyl) groups"/>
    <property type="evidence" value="ECO:0007669"/>
    <property type="project" value="InterPro"/>
</dbReference>
<dbReference type="GO" id="GO:0016117">
    <property type="term" value="P:carotenoid biosynthetic process"/>
    <property type="evidence" value="ECO:0007669"/>
    <property type="project" value="UniProtKB-KW"/>
</dbReference>
<dbReference type="CDD" id="cd13966">
    <property type="entry name" value="PT_UbiA_4"/>
    <property type="match status" value="1"/>
</dbReference>
<dbReference type="Gene3D" id="1.10.357.140">
    <property type="entry name" value="UbiA prenyltransferase"/>
    <property type="match status" value="1"/>
</dbReference>
<dbReference type="Gene3D" id="1.20.120.1780">
    <property type="entry name" value="UbiA prenyltransferase"/>
    <property type="match status" value="1"/>
</dbReference>
<dbReference type="InterPro" id="IPR050475">
    <property type="entry name" value="Prenyltransferase_related"/>
</dbReference>
<dbReference type="InterPro" id="IPR000537">
    <property type="entry name" value="UbiA_prenyltransferase"/>
</dbReference>
<dbReference type="InterPro" id="IPR044878">
    <property type="entry name" value="UbiA_sf"/>
</dbReference>
<dbReference type="NCBIfam" id="NF009516">
    <property type="entry name" value="PRK12875.1"/>
    <property type="match status" value="1"/>
</dbReference>
<dbReference type="PANTHER" id="PTHR42723">
    <property type="entry name" value="CHLOROPHYLL SYNTHASE"/>
    <property type="match status" value="1"/>
</dbReference>
<dbReference type="PANTHER" id="PTHR42723:SF1">
    <property type="entry name" value="CHLOROPHYLL SYNTHASE, CHLOROPLASTIC"/>
    <property type="match status" value="1"/>
</dbReference>
<dbReference type="Pfam" id="PF01040">
    <property type="entry name" value="UbiA"/>
    <property type="match status" value="1"/>
</dbReference>
<protein>
    <recommendedName>
        <fullName evidence="4">Lycopene elongase/hydratase</fullName>
        <ecNumber evidence="2">2.5.1.150</ecNumber>
    </recommendedName>
</protein>
<evidence type="ECO:0000255" key="1"/>
<evidence type="ECO:0000269" key="2">
    <source>
    </source>
</evidence>
<evidence type="ECO:0000303" key="3">
    <source>
    </source>
</evidence>
<evidence type="ECO:0000305" key="4"/>
<evidence type="ECO:0000305" key="5">
    <source>
    </source>
</evidence>
<evidence type="ECO:0000312" key="6">
    <source>
        <dbReference type="EMBL" id="EMA29702.1"/>
    </source>
</evidence>
<name>LYEL_HALJT</name>
<sequence length="294" mass="32067">MPELPTDRLTAVIPPEETLLGYLLRLSRPRFWLYLGGPVIVGVSYAADGPGELFSPLAIALFLYFTIPGNVFLYGVNDIFDADIDEHNPKKDDGREVSYRGDSAVTAIVVASGALALLFALVLPTLGIVALLAWMALSVEYSAPPLRFKTTPFLDSISNGLYILPGVIGYAAIEGVAPPATAVVGAWLWAMGMHTFSAIPDIEPDREAGIQTTATFLGESNTYYYCVMCWLMAAFVFNFTHWVFGVLLLVYPGLVFGILGVGVDIDEAYWWYPAINTVVGMVFTLIALWVMLYG</sequence>
<organism>
    <name type="scientific">Haloarcula japonica (strain ATCC 49778 / DSM 6131 / JCM 7785 / NBRC 101032 / NCIMB 13157 / TR-1)</name>
    <dbReference type="NCBI Taxonomy" id="1227453"/>
    <lineage>
        <taxon>Archaea</taxon>
        <taxon>Methanobacteriati</taxon>
        <taxon>Methanobacteriota</taxon>
        <taxon>Stenosarchaea group</taxon>
        <taxon>Halobacteria</taxon>
        <taxon>Halobacteriales</taxon>
        <taxon>Haloarculaceae</taxon>
        <taxon>Haloarcula</taxon>
    </lineage>
</organism>
<comment type="function">
    <text evidence="2 5">Involved in the biosynthesis of the acyclic C50 carotenoid bacterioruberin (BR) (PubMed:25712483). Acts as a bifunctional elongase/hydratase that catalyzes the elongation of lycopene by attaching a C(5) isoprene unit at C-2, as well as the hydroxylation of the previous end of the molecule (PubMed:25712483). The enzyme acts at both ends of the substrate, and catalyzes the conversion of lycopene to the C(45) intermediate dihydroisopentenyldehydrorhodopin (DH-IDR) and the conversion of isopentenyldehydrorhodopin (IDR) to the C(50) carotenoid dihydrobisanhydrobacterioruberin (DH-BABR) (PubMed:25712483). Can also catalyze the conversion of lycopene to tetrahydrobisanhydrobacterioruberin (TH-BABR) (Probable).</text>
</comment>
<comment type="catalytic activity">
    <reaction evidence="2">
        <text>all-trans-lycopene + dimethylallyl diphosphate + H2O = dihydroisopentenyldehydrorhodopin + diphosphate</text>
        <dbReference type="Rhea" id="RHEA:58188"/>
        <dbReference type="ChEBI" id="CHEBI:15377"/>
        <dbReference type="ChEBI" id="CHEBI:15948"/>
        <dbReference type="ChEBI" id="CHEBI:33019"/>
        <dbReference type="ChEBI" id="CHEBI:57623"/>
        <dbReference type="ChEBI" id="CHEBI:87163"/>
        <dbReference type="EC" id="2.5.1.150"/>
    </reaction>
</comment>
<comment type="catalytic activity">
    <reaction evidence="2">
        <text>isopentenyldehydrorhodopin + dimethylallyl diphosphate + H2O = dihydrobisanhydrobacterioruberin + diphosphate</text>
        <dbReference type="Rhea" id="RHEA:58192"/>
        <dbReference type="ChEBI" id="CHEBI:15377"/>
        <dbReference type="ChEBI" id="CHEBI:33019"/>
        <dbReference type="ChEBI" id="CHEBI:57623"/>
        <dbReference type="ChEBI" id="CHEBI:87161"/>
        <dbReference type="ChEBI" id="CHEBI:87162"/>
        <dbReference type="EC" id="2.5.1.150"/>
    </reaction>
</comment>
<comment type="pathway">
    <text evidence="2">Carotenoid biosynthesis.</text>
</comment>
<comment type="subcellular location">
    <subcellularLocation>
        <location evidence="4">Cell membrane</location>
        <topology evidence="1">Multi-pass membrane protein</topology>
    </subcellularLocation>
</comment>
<comment type="disruption phenotype">
    <text evidence="2">Mutant produces lycopene, but not C(45) and C(50) carotenoids.</text>
</comment>
<comment type="similarity">
    <text evidence="4">Belongs to the UbiA prenyltransferase family.</text>
</comment>
<keyword id="KW-0125">Carotenoid biosynthesis</keyword>
<keyword id="KW-1003">Cell membrane</keyword>
<keyword id="KW-0472">Membrane</keyword>
<keyword id="KW-0808">Transferase</keyword>
<keyword id="KW-0812">Transmembrane</keyword>
<keyword id="KW-1133">Transmembrane helix</keyword>
<reference key="1">
    <citation type="journal article" date="2015" name="J. Bacteriol.">
        <title>Complete biosynthetic pathway of the C50 carotenoid bacterioruberin from lycopene in the extremely halophilic archaeon Haloarcula japonica.</title>
        <authorList>
            <person name="Yang Y."/>
            <person name="Yatsunami R."/>
            <person name="Ando A."/>
            <person name="Miyoko N."/>
            <person name="Fukui T."/>
            <person name="Takaichi S."/>
            <person name="Nakamura S."/>
        </authorList>
    </citation>
    <scope>NUCLEOTIDE SEQUENCE [GENOMIC DNA]</scope>
    <scope>FUNCTION</scope>
    <scope>CATALYTIC ACTIVITY</scope>
    <scope>PATHWAY</scope>
    <scope>DISRUPTION PHENOTYPE</scope>
    <source>
        <strain>ATCC 49778 / DSM 6131 / JCM 7785 / NBRC 101032 / NCIMB 13157 / TR-1</strain>
    </source>
</reference>
<reference key="2">
    <citation type="journal article" date="2014" name="PLoS Genet.">
        <title>Phylogenetically driven sequencing of extremely halophilic archaea reveals strategies for static and dynamic osmo-response.</title>
        <authorList>
            <person name="Becker E.A."/>
            <person name="Seitzer P.M."/>
            <person name="Tritt A."/>
            <person name="Larsen D."/>
            <person name="Krusor M."/>
            <person name="Yao A.I."/>
            <person name="Wu D."/>
            <person name="Madern D."/>
            <person name="Eisen J.A."/>
            <person name="Darling A.E."/>
            <person name="Facciotti M.T."/>
        </authorList>
    </citation>
    <scope>NUCLEOTIDE SEQUENCE [LARGE SCALE GENOMIC DNA]</scope>
    <source>
        <strain>ATCC 49778 / DSM 6131 / JCM 7785 / NBRC 101032 / NCIMB 13157 / TR-1</strain>
    </source>
</reference>
<proteinExistence type="evidence at protein level"/>
<feature type="chain" id="PRO_0000450594" description="Lycopene elongase/hydratase">
    <location>
        <begin position="1"/>
        <end position="294"/>
    </location>
</feature>
<feature type="transmembrane region" description="Helical" evidence="1">
    <location>
        <begin position="31"/>
        <end position="51"/>
    </location>
</feature>
<feature type="transmembrane region" description="Helical" evidence="1">
    <location>
        <begin position="53"/>
        <end position="73"/>
    </location>
</feature>
<feature type="transmembrane region" description="Helical" evidence="1">
    <location>
        <begin position="115"/>
        <end position="135"/>
    </location>
</feature>
<feature type="transmembrane region" description="Helical" evidence="1">
    <location>
        <begin position="160"/>
        <end position="180"/>
    </location>
</feature>
<feature type="transmembrane region" description="Helical" evidence="1">
    <location>
        <begin position="182"/>
        <end position="202"/>
    </location>
</feature>
<feature type="transmembrane region" description="Helical" evidence="1">
    <location>
        <begin position="222"/>
        <end position="242"/>
    </location>
</feature>
<feature type="transmembrane region" description="Helical" evidence="1">
    <location>
        <begin position="243"/>
        <end position="263"/>
    </location>
</feature>
<feature type="transmembrane region" description="Helical" evidence="1">
    <location>
        <begin position="274"/>
        <end position="294"/>
    </location>
</feature>
<accession>M0L7V9</accession>
<accession>A0A0A1GNW8</accession>